<keyword id="KW-0963">Cytoplasm</keyword>
<keyword id="KW-0479">Metal-binding</keyword>
<keyword id="KW-0862">Zinc</keyword>
<dbReference type="EMBL" id="AP009324">
    <property type="protein sequence ID" value="BAF78930.1"/>
    <property type="molecule type" value="Genomic_DNA"/>
</dbReference>
<dbReference type="RefSeq" id="WP_001058111.1">
    <property type="nucleotide sequence ID" value="NZ_CTYB01000037.1"/>
</dbReference>
<dbReference type="KEGG" id="saw:SAHV_2047"/>
<dbReference type="HOGENOM" id="CLU_123820_0_0_9"/>
<dbReference type="GO" id="GO:0005737">
    <property type="term" value="C:cytoplasm"/>
    <property type="evidence" value="ECO:0007669"/>
    <property type="project" value="UniProtKB-SubCell"/>
</dbReference>
<dbReference type="GO" id="GO:0008270">
    <property type="term" value="F:zinc ion binding"/>
    <property type="evidence" value="ECO:0007669"/>
    <property type="project" value="UniProtKB-UniRule"/>
</dbReference>
<dbReference type="GO" id="GO:0006950">
    <property type="term" value="P:response to stress"/>
    <property type="evidence" value="ECO:0007669"/>
    <property type="project" value="UniProtKB-ARBA"/>
</dbReference>
<dbReference type="HAMAP" id="MF_00745">
    <property type="entry name" value="SprT_like"/>
    <property type="match status" value="1"/>
</dbReference>
<dbReference type="InterPro" id="IPR006640">
    <property type="entry name" value="SprT-like_domain"/>
</dbReference>
<dbReference type="InterPro" id="IPR035240">
    <property type="entry name" value="SprT_Zn_ribbon"/>
</dbReference>
<dbReference type="InterPro" id="IPR023524">
    <property type="entry name" value="Uncharacterised_SprT-like"/>
</dbReference>
<dbReference type="NCBIfam" id="NF003339">
    <property type="entry name" value="PRK04351.1"/>
    <property type="match status" value="1"/>
</dbReference>
<dbReference type="Pfam" id="PF10263">
    <property type="entry name" value="SprT-like"/>
    <property type="match status" value="1"/>
</dbReference>
<dbReference type="Pfam" id="PF17283">
    <property type="entry name" value="Zn_ribbon_SprT"/>
    <property type="match status" value="1"/>
</dbReference>
<dbReference type="SMART" id="SM00731">
    <property type="entry name" value="SprT"/>
    <property type="match status" value="1"/>
</dbReference>
<protein>
    <recommendedName>
        <fullName evidence="1">Protein SprT-like</fullName>
    </recommendedName>
</protein>
<reference key="1">
    <citation type="journal article" date="2008" name="Antimicrob. Agents Chemother.">
        <title>Mutated response regulator graR is responsible for phenotypic conversion of Staphylococcus aureus from heterogeneous vancomycin-intermediate resistance to vancomycin-intermediate resistance.</title>
        <authorList>
            <person name="Neoh H.-M."/>
            <person name="Cui L."/>
            <person name="Yuzawa H."/>
            <person name="Takeuchi F."/>
            <person name="Matsuo M."/>
            <person name="Hiramatsu K."/>
        </authorList>
    </citation>
    <scope>NUCLEOTIDE SEQUENCE [LARGE SCALE GENOMIC DNA]</scope>
    <source>
        <strain>Mu3 / ATCC 700698</strain>
    </source>
</reference>
<gene>
    <name type="ordered locus">SAHV_2047</name>
</gene>
<name>SPRTL_STAA1</name>
<organism>
    <name type="scientific">Staphylococcus aureus (strain Mu3 / ATCC 700698)</name>
    <dbReference type="NCBI Taxonomy" id="418127"/>
    <lineage>
        <taxon>Bacteria</taxon>
        <taxon>Bacillati</taxon>
        <taxon>Bacillota</taxon>
        <taxon>Bacilli</taxon>
        <taxon>Bacillales</taxon>
        <taxon>Staphylococcaceae</taxon>
        <taxon>Staphylococcus</taxon>
    </lineage>
</organism>
<proteinExistence type="inferred from homology"/>
<comment type="cofactor">
    <cofactor evidence="1">
        <name>Zn(2+)</name>
        <dbReference type="ChEBI" id="CHEBI:29105"/>
    </cofactor>
    <text evidence="1">Binds 1 zinc ion.</text>
</comment>
<comment type="subcellular location">
    <subcellularLocation>
        <location evidence="1">Cytoplasm</location>
    </subcellularLocation>
</comment>
<comment type="similarity">
    <text evidence="1">Belongs to the SprT family.</text>
</comment>
<accession>A7X4N7</accession>
<evidence type="ECO:0000255" key="1">
    <source>
        <dbReference type="HAMAP-Rule" id="MF_00745"/>
    </source>
</evidence>
<feature type="chain" id="PRO_1000046514" description="Protein SprT-like">
    <location>
        <begin position="1"/>
        <end position="151"/>
    </location>
</feature>
<feature type="domain" description="SprT-like" evidence="1">
    <location>
        <begin position="6"/>
        <end position="147"/>
    </location>
</feature>
<feature type="active site" evidence="1">
    <location>
        <position position="68"/>
    </location>
</feature>
<feature type="binding site" evidence="1">
    <location>
        <position position="67"/>
    </location>
    <ligand>
        <name>Zn(2+)</name>
        <dbReference type="ChEBI" id="CHEBI:29105"/>
    </ligand>
</feature>
<feature type="binding site" evidence="1">
    <location>
        <position position="71"/>
    </location>
    <ligand>
        <name>Zn(2+)</name>
        <dbReference type="ChEBI" id="CHEBI:29105"/>
    </ligand>
</feature>
<sequence>MNNDKLQRMVENLSEEKFGRTFRHCAYFNKRLRTTGGRYLLKSHDIEINPKQYEHYGEDAVVKIILHELCHYHLHIAGKGYQHKDQDFKRLSQQVGAPRFCNSIESYQQRANYEYYCTKCHAKYIRIRKVDTNRMRCGHCNGKLRMKRQLK</sequence>